<evidence type="ECO:0000269" key="1">
    <source>
    </source>
</evidence>
<evidence type="ECO:0000303" key="2">
    <source>
    </source>
</evidence>
<evidence type="ECO:0000305" key="3"/>
<comment type="subcellular location">
    <subcellularLocation>
        <location evidence="1">Secreted</location>
    </subcellularLocation>
</comment>
<comment type="tissue specificity">
    <text evidence="1">Expressed by the skin glands.</text>
</comment>
<comment type="mass spectrometry"/>
<sequence>KPEEDWGHK</sequence>
<protein>
    <recommendedName>
        <fullName evidence="2">Skin secreted peptide P1-1</fullName>
        <shortName evidence="2">PjP1-1</shortName>
    </recommendedName>
</protein>
<dbReference type="GO" id="GO:0005576">
    <property type="term" value="C:extracellular region"/>
    <property type="evidence" value="ECO:0007669"/>
    <property type="project" value="UniProtKB-SubCell"/>
</dbReference>
<organism>
    <name type="scientific">Phasmahyla jandaia</name>
    <name type="common">Jandaia leaf frog</name>
    <name type="synonym">Phyllomedusa jandaia</name>
    <dbReference type="NCBI Taxonomy" id="762504"/>
    <lineage>
        <taxon>Eukaryota</taxon>
        <taxon>Metazoa</taxon>
        <taxon>Chordata</taxon>
        <taxon>Craniata</taxon>
        <taxon>Vertebrata</taxon>
        <taxon>Euteleostomi</taxon>
        <taxon>Amphibia</taxon>
        <taxon>Batrachia</taxon>
        <taxon>Anura</taxon>
        <taxon>Neobatrachia</taxon>
        <taxon>Hyloidea</taxon>
        <taxon>Hylidae</taxon>
        <taxon>Phyllomedusinae</taxon>
        <taxon>Phasmahyla</taxon>
    </lineage>
</organism>
<accession>P86602</accession>
<keyword id="KW-0903">Direct protein sequencing</keyword>
<keyword id="KW-0964">Secreted</keyword>
<proteinExistence type="evidence at protein level"/>
<reference evidence="3" key="1">
    <citation type="journal article" date="2011" name="Toxicon">
        <title>Peptidomic dissection of the skin secretion of Phasmahyla jandaia (Bokermann and Sazima, 1978) (Anura, Hylidae, Phyllomedusinae).</title>
        <authorList>
            <person name="Rates B."/>
            <person name="Silva L.P."/>
            <person name="Ireno I.C."/>
            <person name="Leite F.S."/>
            <person name="Borges M.H."/>
            <person name="Bloch C. Jr."/>
            <person name="De Lima M.E."/>
            <person name="Pimenta A.M."/>
        </authorList>
    </citation>
    <scope>PROTEIN SEQUENCE</scope>
    <scope>SUBCELLULAR LOCATION</scope>
    <scope>TISSUE SPECIFICITY</scope>
    <scope>MASS SPECTROMETRY</scope>
    <source>
        <tissue evidence="1">Skin secretion</tissue>
    </source>
</reference>
<feature type="peptide" id="PRO_0000404639" description="Skin secreted peptide P1-1" evidence="1">
    <location>
        <begin position="1"/>
        <end position="9"/>
    </location>
</feature>
<feature type="unsure residue" description="K or Q" evidence="1">
    <location>
        <position position="1"/>
    </location>
</feature>
<feature type="unsure residue" description="K or Q" evidence="1">
    <location>
        <position position="9"/>
    </location>
</feature>
<name>SSP11_PHAJA</name>